<feature type="signal peptide" evidence="2">
    <location>
        <begin position="1"/>
        <end position="19"/>
    </location>
</feature>
<feature type="chain" id="PRO_0000324694" description="External core antigen" evidence="2">
    <location>
        <begin position="20"/>
        <end position="214"/>
    </location>
</feature>
<feature type="propeptide" id="PRO_0000324695" evidence="1">
    <location>
        <begin position="186"/>
        <end position="214"/>
    </location>
</feature>
<feature type="repeat" description="1; half-length">
    <location>
        <begin position="186"/>
        <end position="192"/>
    </location>
</feature>
<feature type="repeat" description="2">
    <location>
        <begin position="193"/>
        <end position="200"/>
    </location>
</feature>
<feature type="repeat" description="3">
    <location>
        <begin position="201"/>
        <end position="208"/>
    </location>
</feature>
<feature type="region of interest" description="HBEAG" evidence="2">
    <location>
        <begin position="25"/>
        <end position="27"/>
    </location>
</feature>
<feature type="region of interest" description="Disordered" evidence="3">
    <location>
        <begin position="165"/>
        <end position="214"/>
    </location>
</feature>
<feature type="region of interest" description="3 X 8 AA repeats of S-P-R-R-R-R-S-Q">
    <location>
        <begin position="186"/>
        <end position="208"/>
    </location>
</feature>
<feature type="compositionally biased region" description="Basic residues" evidence="3">
    <location>
        <begin position="178"/>
        <end position="207"/>
    </location>
</feature>
<feature type="site" description="Cleavage; by host" evidence="2">
    <location>
        <begin position="185"/>
        <end position="186"/>
    </location>
</feature>
<feature type="disulfide bond" description="Interchain" evidence="2">
    <location>
        <position position="77"/>
    </location>
</feature>
<feature type="disulfide bond" description="Interchain" evidence="2">
    <location>
        <position position="90"/>
    </location>
</feature>
<reference key="1">
    <citation type="journal article" date="2001" name="J. Med. Virol.">
        <title>Molecular analysis of hepatitis B virus genomes isolated from black African patients with fulminant hepatitis B.</title>
        <authorList>
            <person name="Owiredu W.K."/>
            <person name="Kramvis A."/>
            <person name="Kew M.C."/>
        </authorList>
    </citation>
    <scope>NUCLEOTIDE SEQUENCE [GENOMIC DNA]</scope>
</reference>
<comment type="function">
    <text evidence="2">May regulate immune response to the intracellular capsid in acting as a T-cell tolerogen, by having an immunoregulatory effect which prevents destruction of infected cells by cytotoxic T-cells. This immune regulation may predispose to chronicity during perinatal infections and prevent severe liver injury during adult infections.</text>
</comment>
<comment type="subunit">
    <text evidence="2">Homodimerizes.</text>
</comment>
<comment type="subcellular location">
    <subcellularLocation>
        <location evidence="2">Secreted</location>
    </subcellularLocation>
    <subcellularLocation>
        <location evidence="2">Host nucleus</location>
    </subcellularLocation>
</comment>
<comment type="alternative products">
    <event type="alternative initiation"/>
    <isoform>
        <id>Q91C37-1</id>
        <name>External core antigen</name>
        <sequence type="displayed"/>
    </isoform>
    <isoform>
        <id>P0C695-1</id>
        <name>Capsid protein</name>
        <sequence type="external"/>
    </isoform>
</comment>
<comment type="PTM">
    <text evidence="2">Phosphorylated.</text>
</comment>
<comment type="PTM">
    <text evidence="2">Cleaved by host furin.</text>
</comment>
<comment type="similarity">
    <text evidence="2">Belongs to the orthohepadnavirus precore antigen family.</text>
</comment>
<organismHost>
    <name type="scientific">Homo sapiens</name>
    <name type="common">Human</name>
    <dbReference type="NCBI Taxonomy" id="9606"/>
</organismHost>
<organismHost>
    <name type="scientific">Pan troglodytes</name>
    <name type="common">Chimpanzee</name>
    <dbReference type="NCBI Taxonomy" id="9598"/>
</organismHost>
<proteinExistence type="inferred from homology"/>
<sequence>MQLFHLCLIISCTCPTVQASKLCLGWLWGMDIDPYKEFGATVELLSFLPSDFFPSVRDLLDTASALYREALESPEHCSPHHTALRETILCWGELMTLATWVGNNLEDPASRDLVVNYVNTNMGLKIRQLLWFHISCLTFGRETVLEYLVSFGVWIRTPPAYRPPNAPILSTLPETTVVRRRDRGRSPRRRTPSPRRRRSQSPRRRRSQSRESQC</sequence>
<evidence type="ECO:0000250" key="1"/>
<evidence type="ECO:0000255" key="2">
    <source>
        <dbReference type="HAMAP-Rule" id="MF_04076"/>
    </source>
</evidence>
<evidence type="ECO:0000256" key="3">
    <source>
        <dbReference type="SAM" id="MobiDB-lite"/>
    </source>
</evidence>
<protein>
    <recommendedName>
        <fullName evidence="2">External core antigen</fullName>
    </recommendedName>
    <alternativeName>
        <fullName evidence="2">HBeAg</fullName>
    </alternativeName>
    <alternativeName>
        <fullName evidence="2">Precore protein</fullName>
    </alternativeName>
    <alternativeName>
        <fullName evidence="2">p25</fullName>
    </alternativeName>
</protein>
<organism>
    <name type="scientific">Hepatitis B virus genotype A1 subtype adw2 (isolate South Africa/84/2001)</name>
    <name type="common">HBV-A</name>
    <dbReference type="NCBI Taxonomy" id="489454"/>
    <lineage>
        <taxon>Viruses</taxon>
        <taxon>Riboviria</taxon>
        <taxon>Pararnavirae</taxon>
        <taxon>Artverviricota</taxon>
        <taxon>Revtraviricetes</taxon>
        <taxon>Blubervirales</taxon>
        <taxon>Hepadnaviridae</taxon>
        <taxon>Orthohepadnavirus</taxon>
        <taxon>Hepatitis B virus</taxon>
    </lineage>
</organism>
<dbReference type="EMBL" id="AF297625">
    <property type="protein sequence ID" value="AAK97202.1"/>
    <property type="molecule type" value="Genomic_DNA"/>
</dbReference>
<dbReference type="PIR" id="C94409">
    <property type="entry name" value="NKVLA3"/>
</dbReference>
<dbReference type="PIR" id="S33686">
    <property type="entry name" value="S33686"/>
</dbReference>
<dbReference type="SMR" id="Q91C37"/>
<dbReference type="Proteomes" id="UP000007909">
    <property type="component" value="Genome"/>
</dbReference>
<dbReference type="GO" id="GO:0005576">
    <property type="term" value="C:extracellular region"/>
    <property type="evidence" value="ECO:0007669"/>
    <property type="project" value="UniProtKB-SubCell"/>
</dbReference>
<dbReference type="GO" id="GO:0043657">
    <property type="term" value="C:host cell"/>
    <property type="evidence" value="ECO:0007669"/>
    <property type="project" value="GOC"/>
</dbReference>
<dbReference type="GO" id="GO:0030430">
    <property type="term" value="C:host cell cytoplasm"/>
    <property type="evidence" value="ECO:0007669"/>
    <property type="project" value="UniProtKB-UniRule"/>
</dbReference>
<dbReference type="GO" id="GO:0042025">
    <property type="term" value="C:host cell nucleus"/>
    <property type="evidence" value="ECO:0007669"/>
    <property type="project" value="UniProtKB-SubCell"/>
</dbReference>
<dbReference type="GO" id="GO:0039619">
    <property type="term" value="C:T=4 icosahedral viral capsid"/>
    <property type="evidence" value="ECO:0007669"/>
    <property type="project" value="UniProtKB-UniRule"/>
</dbReference>
<dbReference type="GO" id="GO:0003677">
    <property type="term" value="F:DNA binding"/>
    <property type="evidence" value="ECO:0007669"/>
    <property type="project" value="UniProtKB-UniRule"/>
</dbReference>
<dbReference type="GO" id="GO:0003723">
    <property type="term" value="F:RNA binding"/>
    <property type="evidence" value="ECO:0007669"/>
    <property type="project" value="UniProtKB-UniRule"/>
</dbReference>
<dbReference type="GO" id="GO:0005198">
    <property type="term" value="F:structural molecule activity"/>
    <property type="evidence" value="ECO:0007669"/>
    <property type="project" value="UniProtKB-UniRule"/>
</dbReference>
<dbReference type="GO" id="GO:0075521">
    <property type="term" value="P:microtubule-dependent intracellular transport of viral material towards nucleus"/>
    <property type="evidence" value="ECO:0007669"/>
    <property type="project" value="UniProtKB-UniRule"/>
</dbReference>
<dbReference type="GO" id="GO:0046718">
    <property type="term" value="P:symbiont entry into host cell"/>
    <property type="evidence" value="ECO:0007669"/>
    <property type="project" value="UniProtKB-UniRule"/>
</dbReference>
<dbReference type="GO" id="GO:0075732">
    <property type="term" value="P:viral penetration into host nucleus"/>
    <property type="evidence" value="ECO:0007669"/>
    <property type="project" value="UniProtKB-UniRule"/>
</dbReference>
<dbReference type="FunFam" id="1.10.4090.10:FF:000001">
    <property type="entry name" value="Capsid protein"/>
    <property type="match status" value="1"/>
</dbReference>
<dbReference type="Gene3D" id="1.10.4090.10">
    <property type="entry name" value="Viral capsid, core domain supefamily, Hepatitis B virus"/>
    <property type="match status" value="1"/>
</dbReference>
<dbReference type="HAMAP" id="MF_04076">
    <property type="entry name" value="HBV_HBEAG"/>
    <property type="match status" value="1"/>
</dbReference>
<dbReference type="InterPro" id="IPR013195">
    <property type="entry name" value="Hepatitis_B_virus_capsid_N"/>
</dbReference>
<dbReference type="InterPro" id="IPR002006">
    <property type="entry name" value="Hepatitis_core"/>
</dbReference>
<dbReference type="InterPro" id="IPR036459">
    <property type="entry name" value="Viral_capsid_core_dom_sf_HBV"/>
</dbReference>
<dbReference type="Pfam" id="PF08290">
    <property type="entry name" value="Hep_core_N"/>
    <property type="match status" value="1"/>
</dbReference>
<dbReference type="Pfam" id="PF00906">
    <property type="entry name" value="Hepatitis_core"/>
    <property type="match status" value="2"/>
</dbReference>
<dbReference type="SUPFAM" id="SSF47852">
    <property type="entry name" value="Hepatitis B viral capsid (hbcag)"/>
    <property type="match status" value="1"/>
</dbReference>
<accession>Q91C37</accession>
<keyword id="KW-0024">Alternative initiation</keyword>
<keyword id="KW-1015">Disulfide bond</keyword>
<keyword id="KW-1048">Host nucleus</keyword>
<keyword id="KW-0945">Host-virus interaction</keyword>
<keyword id="KW-0677">Repeat</keyword>
<keyword id="KW-0964">Secreted</keyword>
<keyword id="KW-0732">Signal</keyword>
<keyword id="KW-0899">Viral immunoevasion</keyword>
<gene>
    <name evidence="2" type="primary">C</name>
</gene>
<name>HBEAG_HBVA6</name>